<name>PIHD2_MOUSE</name>
<dbReference type="EMBL" id="BC019481">
    <property type="protein sequence ID" value="AAH19481.1"/>
    <property type="status" value="ALT_SEQ"/>
    <property type="molecule type" value="mRNA"/>
</dbReference>
<dbReference type="EMBL" id="BC039645">
    <property type="protein sequence ID" value="AAH39645.1"/>
    <property type="molecule type" value="mRNA"/>
</dbReference>
<dbReference type="EMBL" id="AK012458">
    <property type="protein sequence ID" value="BAB28253.1"/>
    <property type="molecule type" value="mRNA"/>
</dbReference>
<dbReference type="CCDS" id="CCDS23167.1">
    <molecule id="Q8CHR9-1"/>
</dbReference>
<dbReference type="RefSeq" id="NP_082576.1">
    <molecule id="Q8CHR9-1"/>
    <property type="nucleotide sequence ID" value="NM_028300.2"/>
</dbReference>
<dbReference type="SMR" id="Q8CHR9"/>
<dbReference type="FunCoup" id="Q8CHR9">
    <property type="interactions" value="98"/>
</dbReference>
<dbReference type="STRING" id="10090.ENSMUSP00000000171"/>
<dbReference type="iPTMnet" id="Q8CHR9"/>
<dbReference type="PhosphoSitePlus" id="Q8CHR9"/>
<dbReference type="PaxDb" id="10090-ENSMUSP00000000171"/>
<dbReference type="ProteomicsDB" id="287728">
    <molecule id="Q8CHR9-1"/>
</dbReference>
<dbReference type="ProteomicsDB" id="287729">
    <molecule id="Q8CHR9-2"/>
</dbReference>
<dbReference type="Antibodypedia" id="51744">
    <property type="antibodies" value="165 antibodies from 15 providers"/>
</dbReference>
<dbReference type="DNASU" id="72614"/>
<dbReference type="Ensembl" id="ENSMUST00000000171.15">
    <molecule id="Q8CHR9-1"/>
    <property type="protein sequence ID" value="ENSMUSP00000000171.9"/>
    <property type="gene ID" value="ENSMUSG00000000167.15"/>
</dbReference>
<dbReference type="Ensembl" id="ENSMUST00000132187.2">
    <molecule id="Q8CHR9-2"/>
    <property type="protein sequence ID" value="ENSMUSP00000118064.2"/>
    <property type="gene ID" value="ENSMUSG00000000167.15"/>
</dbReference>
<dbReference type="GeneID" id="72614"/>
<dbReference type="KEGG" id="mmu:72614"/>
<dbReference type="UCSC" id="uc009pjz.2">
    <molecule id="Q8CHR9-1"/>
    <property type="organism name" value="mouse"/>
</dbReference>
<dbReference type="AGR" id="MGI:1919864"/>
<dbReference type="CTD" id="120379"/>
<dbReference type="MGI" id="MGI:1919864">
    <property type="gene designation" value="Pih1d2"/>
</dbReference>
<dbReference type="VEuPathDB" id="HostDB:ENSMUSG00000000167"/>
<dbReference type="eggNOG" id="KOG4356">
    <property type="taxonomic scope" value="Eukaryota"/>
</dbReference>
<dbReference type="GeneTree" id="ENSGT00510000048581"/>
<dbReference type="HOGENOM" id="CLU_075974_0_0_1"/>
<dbReference type="InParanoid" id="Q8CHR9"/>
<dbReference type="OMA" id="SCLCTEI"/>
<dbReference type="OrthoDB" id="545063at2759"/>
<dbReference type="PhylomeDB" id="Q8CHR9"/>
<dbReference type="TreeFam" id="TF324376"/>
<dbReference type="BioGRID-ORCS" id="72614">
    <property type="hits" value="3 hits in 77 CRISPR screens"/>
</dbReference>
<dbReference type="PRO" id="PR:Q8CHR9"/>
<dbReference type="Proteomes" id="UP000000589">
    <property type="component" value="Chromosome 9"/>
</dbReference>
<dbReference type="RNAct" id="Q8CHR9">
    <property type="molecule type" value="protein"/>
</dbReference>
<dbReference type="Bgee" id="ENSMUSG00000000167">
    <property type="expression patterns" value="Expressed in spermatocyte and 103 other cell types or tissues"/>
</dbReference>
<dbReference type="ExpressionAtlas" id="Q8CHR9">
    <property type="expression patterns" value="baseline and differential"/>
</dbReference>
<dbReference type="GO" id="GO:0101031">
    <property type="term" value="C:protein folding chaperone complex"/>
    <property type="evidence" value="ECO:0007669"/>
    <property type="project" value="Ensembl"/>
</dbReference>
<dbReference type="GO" id="GO:0031267">
    <property type="term" value="F:small GTPase binding"/>
    <property type="evidence" value="ECO:0007669"/>
    <property type="project" value="Ensembl"/>
</dbReference>
<dbReference type="InterPro" id="IPR050734">
    <property type="entry name" value="PIH1/Kintoun_subfamily"/>
</dbReference>
<dbReference type="InterPro" id="IPR012981">
    <property type="entry name" value="PIH1_N"/>
</dbReference>
<dbReference type="InterPro" id="IPR041442">
    <property type="entry name" value="PIH1D1/2/3_CS-like"/>
</dbReference>
<dbReference type="PANTHER" id="PTHR22997">
    <property type="entry name" value="PIH1 DOMAIN-CONTAINING PROTEIN 1"/>
    <property type="match status" value="1"/>
</dbReference>
<dbReference type="PANTHER" id="PTHR22997:SF6">
    <property type="entry name" value="PIH1 DOMAIN-CONTAINING PROTEIN 2"/>
    <property type="match status" value="1"/>
</dbReference>
<dbReference type="Pfam" id="PF08190">
    <property type="entry name" value="PIH1"/>
    <property type="match status" value="1"/>
</dbReference>
<dbReference type="Pfam" id="PF18201">
    <property type="entry name" value="PIH1_CS"/>
    <property type="match status" value="1"/>
</dbReference>
<keyword id="KW-0025">Alternative splicing</keyword>
<keyword id="KW-1185">Reference proteome</keyword>
<sequence>MTVSSKGLLTHISQFWNMLDDLAENDPERYRNFIQQELKDGKQLCVNPEPQLCIQTKILKPNEKVLFINLCQWERIPAPQSATRPVPVSVGRPEDSAEASDAYTIIDVAYNPGVLQAAEKDQGIKDQLIRMAMLCIEERLQFTLAHSYHLTSFRLKGSIQRMKESLMGIKTDFPDLKAMTRTENTLARIRSSTVSEPNHLPEVLLTKKQASAKGRCLIEEISSSEIQVEVKKPAYELKVVKDRNEKPLKIELKVELPGIKSVSLCELSVSEVDILIEVSEMYRLCLNLPESINTEMTTAKFVKNKSALIITMPLA</sequence>
<organism>
    <name type="scientific">Mus musculus</name>
    <name type="common">Mouse</name>
    <dbReference type="NCBI Taxonomy" id="10090"/>
    <lineage>
        <taxon>Eukaryota</taxon>
        <taxon>Metazoa</taxon>
        <taxon>Chordata</taxon>
        <taxon>Craniata</taxon>
        <taxon>Vertebrata</taxon>
        <taxon>Euteleostomi</taxon>
        <taxon>Mammalia</taxon>
        <taxon>Eutheria</taxon>
        <taxon>Euarchontoglires</taxon>
        <taxon>Glires</taxon>
        <taxon>Rodentia</taxon>
        <taxon>Myomorpha</taxon>
        <taxon>Muroidea</taxon>
        <taxon>Muridae</taxon>
        <taxon>Murinae</taxon>
        <taxon>Mus</taxon>
        <taxon>Mus</taxon>
    </lineage>
</organism>
<feature type="chain" id="PRO_0000307335" description="PIH1 domain-containing protein 2">
    <location>
        <begin position="1"/>
        <end position="315"/>
    </location>
</feature>
<feature type="splice variant" id="VSP_028718" description="In isoform 2." evidence="1">
    <original>VSVGRPEDSAEASDAYTIIDVAYNPGV</original>
    <variation>MLIPSLMLPTILVFCKRQKKTKGSKIS</variation>
    <location>
        <begin position="88"/>
        <end position="114"/>
    </location>
</feature>
<feature type="splice variant" id="VSP_028719" description="In isoform 2." evidence="1">
    <location>
        <begin position="115"/>
        <end position="315"/>
    </location>
</feature>
<reference key="1">
    <citation type="journal article" date="2004" name="Genome Res.">
        <title>The status, quality, and expansion of the NIH full-length cDNA project: the Mammalian Gene Collection (MGC).</title>
        <authorList>
            <consortium name="The MGC Project Team"/>
        </authorList>
    </citation>
    <scope>NUCLEOTIDE SEQUENCE [LARGE SCALE MRNA] (ISOFORMS 1 AND 2)</scope>
    <source>
        <strain>FVB/N-3</strain>
        <tissue>Mammary tumor</tissue>
        <tissue>Salivary gland</tissue>
    </source>
</reference>
<reference key="2">
    <citation type="journal article" date="2005" name="Science">
        <title>The transcriptional landscape of the mammalian genome.</title>
        <authorList>
            <person name="Carninci P."/>
            <person name="Kasukawa T."/>
            <person name="Katayama S."/>
            <person name="Gough J."/>
            <person name="Frith M.C."/>
            <person name="Maeda N."/>
            <person name="Oyama R."/>
            <person name="Ravasi T."/>
            <person name="Lenhard B."/>
            <person name="Wells C."/>
            <person name="Kodzius R."/>
            <person name="Shimokawa K."/>
            <person name="Bajic V.B."/>
            <person name="Brenner S.E."/>
            <person name="Batalov S."/>
            <person name="Forrest A.R."/>
            <person name="Zavolan M."/>
            <person name="Davis M.J."/>
            <person name="Wilming L.G."/>
            <person name="Aidinis V."/>
            <person name="Allen J.E."/>
            <person name="Ambesi-Impiombato A."/>
            <person name="Apweiler R."/>
            <person name="Aturaliya R.N."/>
            <person name="Bailey T.L."/>
            <person name="Bansal M."/>
            <person name="Baxter L."/>
            <person name="Beisel K.W."/>
            <person name="Bersano T."/>
            <person name="Bono H."/>
            <person name="Chalk A.M."/>
            <person name="Chiu K.P."/>
            <person name="Choudhary V."/>
            <person name="Christoffels A."/>
            <person name="Clutterbuck D.R."/>
            <person name="Crowe M.L."/>
            <person name="Dalla E."/>
            <person name="Dalrymple B.P."/>
            <person name="de Bono B."/>
            <person name="Della Gatta G."/>
            <person name="di Bernardo D."/>
            <person name="Down T."/>
            <person name="Engstrom P."/>
            <person name="Fagiolini M."/>
            <person name="Faulkner G."/>
            <person name="Fletcher C.F."/>
            <person name="Fukushima T."/>
            <person name="Furuno M."/>
            <person name="Futaki S."/>
            <person name="Gariboldi M."/>
            <person name="Georgii-Hemming P."/>
            <person name="Gingeras T.R."/>
            <person name="Gojobori T."/>
            <person name="Green R.E."/>
            <person name="Gustincich S."/>
            <person name="Harbers M."/>
            <person name="Hayashi Y."/>
            <person name="Hensch T.K."/>
            <person name="Hirokawa N."/>
            <person name="Hill D."/>
            <person name="Huminiecki L."/>
            <person name="Iacono M."/>
            <person name="Ikeo K."/>
            <person name="Iwama A."/>
            <person name="Ishikawa T."/>
            <person name="Jakt M."/>
            <person name="Kanapin A."/>
            <person name="Katoh M."/>
            <person name="Kawasawa Y."/>
            <person name="Kelso J."/>
            <person name="Kitamura H."/>
            <person name="Kitano H."/>
            <person name="Kollias G."/>
            <person name="Krishnan S.P."/>
            <person name="Kruger A."/>
            <person name="Kummerfeld S.K."/>
            <person name="Kurochkin I.V."/>
            <person name="Lareau L.F."/>
            <person name="Lazarevic D."/>
            <person name="Lipovich L."/>
            <person name="Liu J."/>
            <person name="Liuni S."/>
            <person name="McWilliam S."/>
            <person name="Madan Babu M."/>
            <person name="Madera M."/>
            <person name="Marchionni L."/>
            <person name="Matsuda H."/>
            <person name="Matsuzawa S."/>
            <person name="Miki H."/>
            <person name="Mignone F."/>
            <person name="Miyake S."/>
            <person name="Morris K."/>
            <person name="Mottagui-Tabar S."/>
            <person name="Mulder N."/>
            <person name="Nakano N."/>
            <person name="Nakauchi H."/>
            <person name="Ng P."/>
            <person name="Nilsson R."/>
            <person name="Nishiguchi S."/>
            <person name="Nishikawa S."/>
            <person name="Nori F."/>
            <person name="Ohara O."/>
            <person name="Okazaki Y."/>
            <person name="Orlando V."/>
            <person name="Pang K.C."/>
            <person name="Pavan W.J."/>
            <person name="Pavesi G."/>
            <person name="Pesole G."/>
            <person name="Petrovsky N."/>
            <person name="Piazza S."/>
            <person name="Reed J."/>
            <person name="Reid J.F."/>
            <person name="Ring B.Z."/>
            <person name="Ringwald M."/>
            <person name="Rost B."/>
            <person name="Ruan Y."/>
            <person name="Salzberg S.L."/>
            <person name="Sandelin A."/>
            <person name="Schneider C."/>
            <person name="Schoenbach C."/>
            <person name="Sekiguchi K."/>
            <person name="Semple C.A."/>
            <person name="Seno S."/>
            <person name="Sessa L."/>
            <person name="Sheng Y."/>
            <person name="Shibata Y."/>
            <person name="Shimada H."/>
            <person name="Shimada K."/>
            <person name="Silva D."/>
            <person name="Sinclair B."/>
            <person name="Sperling S."/>
            <person name="Stupka E."/>
            <person name="Sugiura K."/>
            <person name="Sultana R."/>
            <person name="Takenaka Y."/>
            <person name="Taki K."/>
            <person name="Tammoja K."/>
            <person name="Tan S.L."/>
            <person name="Tang S."/>
            <person name="Taylor M.S."/>
            <person name="Tegner J."/>
            <person name="Teichmann S.A."/>
            <person name="Ueda H.R."/>
            <person name="van Nimwegen E."/>
            <person name="Verardo R."/>
            <person name="Wei C.L."/>
            <person name="Yagi K."/>
            <person name="Yamanishi H."/>
            <person name="Zabarovsky E."/>
            <person name="Zhu S."/>
            <person name="Zimmer A."/>
            <person name="Hide W."/>
            <person name="Bult C."/>
            <person name="Grimmond S.M."/>
            <person name="Teasdale R.D."/>
            <person name="Liu E.T."/>
            <person name="Brusic V."/>
            <person name="Quackenbush J."/>
            <person name="Wahlestedt C."/>
            <person name="Mattick J.S."/>
            <person name="Hume D.A."/>
            <person name="Kai C."/>
            <person name="Sasaki D."/>
            <person name="Tomaru Y."/>
            <person name="Fukuda S."/>
            <person name="Kanamori-Katayama M."/>
            <person name="Suzuki M."/>
            <person name="Aoki J."/>
            <person name="Arakawa T."/>
            <person name="Iida J."/>
            <person name="Imamura K."/>
            <person name="Itoh M."/>
            <person name="Kato T."/>
            <person name="Kawaji H."/>
            <person name="Kawagashira N."/>
            <person name="Kawashima T."/>
            <person name="Kojima M."/>
            <person name="Kondo S."/>
            <person name="Konno H."/>
            <person name="Nakano K."/>
            <person name="Ninomiya N."/>
            <person name="Nishio T."/>
            <person name="Okada M."/>
            <person name="Plessy C."/>
            <person name="Shibata K."/>
            <person name="Shiraki T."/>
            <person name="Suzuki S."/>
            <person name="Tagami M."/>
            <person name="Waki K."/>
            <person name="Watahiki A."/>
            <person name="Okamura-Oho Y."/>
            <person name="Suzuki H."/>
            <person name="Kawai J."/>
            <person name="Hayashizaki Y."/>
        </authorList>
    </citation>
    <scope>NUCLEOTIDE SEQUENCE [LARGE SCALE MRNA] OF 1-310 (ISOFORM 1)</scope>
    <source>
        <strain>C57BL/6J</strain>
        <tissue>Embryo</tissue>
    </source>
</reference>
<reference key="3">
    <citation type="journal article" date="2010" name="Cell">
        <title>A tissue-specific atlas of mouse protein phosphorylation and expression.</title>
        <authorList>
            <person name="Huttlin E.L."/>
            <person name="Jedrychowski M.P."/>
            <person name="Elias J.E."/>
            <person name="Goswami T."/>
            <person name="Rad R."/>
            <person name="Beausoleil S.A."/>
            <person name="Villen J."/>
            <person name="Haas W."/>
            <person name="Sowa M.E."/>
            <person name="Gygi S.P."/>
        </authorList>
    </citation>
    <scope>IDENTIFICATION BY MASS SPECTROMETRY [LARGE SCALE ANALYSIS]</scope>
    <source>
        <tissue>Testis</tissue>
    </source>
</reference>
<proteinExistence type="evidence at protein level"/>
<protein>
    <recommendedName>
        <fullName>PIH1 domain-containing protein 2</fullName>
    </recommendedName>
</protein>
<accession>Q8CHR9</accession>
<accession>Q05CZ6</accession>
<accession>Q9CSM2</accession>
<comment type="alternative products">
    <event type="alternative splicing"/>
    <isoform>
        <id>Q8CHR9-1</id>
        <name>1</name>
        <sequence type="displayed"/>
    </isoform>
    <isoform>
        <id>Q8CHR9-2</id>
        <name>2</name>
        <sequence type="described" ref="VSP_028718 VSP_028719"/>
    </isoform>
</comment>
<comment type="similarity">
    <text evidence="2">Belongs to the PIH1 family.</text>
</comment>
<comment type="sequence caution" evidence="2">
    <conflict type="erroneous translation">
        <sequence resource="EMBL-CDS" id="AAH19481"/>
    </conflict>
    <text>Wrong choice of CDS.</text>
</comment>
<gene>
    <name type="primary">Pih1d2</name>
</gene>
<evidence type="ECO:0000303" key="1">
    <source>
    </source>
</evidence>
<evidence type="ECO:0000305" key="2"/>